<keyword id="KW-1185">Reference proteome</keyword>
<keyword id="KW-0687">Ribonucleoprotein</keyword>
<keyword id="KW-0689">Ribosomal protein</keyword>
<proteinExistence type="inferred from homology"/>
<protein>
    <recommendedName>
        <fullName evidence="1">Large ribosomal subunit protein bL32</fullName>
    </recommendedName>
    <alternativeName>
        <fullName evidence="3">50S ribosomal protein L32</fullName>
    </alternativeName>
</protein>
<comment type="similarity">
    <text evidence="1">Belongs to the bacterial ribosomal protein bL32 family.</text>
</comment>
<accession>Q92L25</accession>
<organism>
    <name type="scientific">Rhizobium meliloti (strain 1021)</name>
    <name type="common">Ensifer meliloti</name>
    <name type="synonym">Sinorhizobium meliloti</name>
    <dbReference type="NCBI Taxonomy" id="266834"/>
    <lineage>
        <taxon>Bacteria</taxon>
        <taxon>Pseudomonadati</taxon>
        <taxon>Pseudomonadota</taxon>
        <taxon>Alphaproteobacteria</taxon>
        <taxon>Hyphomicrobiales</taxon>
        <taxon>Rhizobiaceae</taxon>
        <taxon>Sinorhizobium/Ensifer group</taxon>
        <taxon>Sinorhizobium</taxon>
    </lineage>
</organism>
<name>RL32_RHIME</name>
<gene>
    <name evidence="1" type="primary">rpmF</name>
    <name type="ordered locus">R03264</name>
    <name type="ORF">SMc03881</name>
</gene>
<feature type="chain" id="PRO_0000172393" description="Large ribosomal subunit protein bL32">
    <location>
        <begin position="1"/>
        <end position="61"/>
    </location>
</feature>
<feature type="region of interest" description="Disordered" evidence="2">
    <location>
        <begin position="1"/>
        <end position="39"/>
    </location>
</feature>
<feature type="compositionally biased region" description="Basic residues" evidence="2">
    <location>
        <begin position="1"/>
        <end position="16"/>
    </location>
</feature>
<feature type="compositionally biased region" description="Basic and acidic residues" evidence="2">
    <location>
        <begin position="28"/>
        <end position="39"/>
    </location>
</feature>
<dbReference type="EMBL" id="AL591688">
    <property type="protein sequence ID" value="CAC47843.1"/>
    <property type="molecule type" value="Genomic_DNA"/>
</dbReference>
<dbReference type="RefSeq" id="NP_387370.1">
    <property type="nucleotide sequence ID" value="NC_003047.1"/>
</dbReference>
<dbReference type="RefSeq" id="WP_003535764.1">
    <property type="nucleotide sequence ID" value="NC_003047.1"/>
</dbReference>
<dbReference type="SMR" id="Q92L25"/>
<dbReference type="EnsemblBacteria" id="CAC47843">
    <property type="protein sequence ID" value="CAC47843"/>
    <property type="gene ID" value="SMc03881"/>
</dbReference>
<dbReference type="GeneID" id="89574242"/>
<dbReference type="KEGG" id="sme:SMc03881"/>
<dbReference type="PATRIC" id="fig|266834.11.peg.4820"/>
<dbReference type="eggNOG" id="COG0333">
    <property type="taxonomic scope" value="Bacteria"/>
</dbReference>
<dbReference type="HOGENOM" id="CLU_129084_2_2_5"/>
<dbReference type="OrthoDB" id="9801927at2"/>
<dbReference type="Proteomes" id="UP000001976">
    <property type="component" value="Chromosome"/>
</dbReference>
<dbReference type="GO" id="GO:0015934">
    <property type="term" value="C:large ribosomal subunit"/>
    <property type="evidence" value="ECO:0007669"/>
    <property type="project" value="InterPro"/>
</dbReference>
<dbReference type="GO" id="GO:0003735">
    <property type="term" value="F:structural constituent of ribosome"/>
    <property type="evidence" value="ECO:0007669"/>
    <property type="project" value="InterPro"/>
</dbReference>
<dbReference type="GO" id="GO:0006412">
    <property type="term" value="P:translation"/>
    <property type="evidence" value="ECO:0007669"/>
    <property type="project" value="UniProtKB-UniRule"/>
</dbReference>
<dbReference type="Gene3D" id="1.20.5.640">
    <property type="entry name" value="Single helix bin"/>
    <property type="match status" value="1"/>
</dbReference>
<dbReference type="HAMAP" id="MF_00340">
    <property type="entry name" value="Ribosomal_bL32"/>
    <property type="match status" value="1"/>
</dbReference>
<dbReference type="InterPro" id="IPR002677">
    <property type="entry name" value="Ribosomal_bL32"/>
</dbReference>
<dbReference type="InterPro" id="IPR044957">
    <property type="entry name" value="Ribosomal_bL32_bact"/>
</dbReference>
<dbReference type="InterPro" id="IPR011332">
    <property type="entry name" value="Ribosomal_zn-bd"/>
</dbReference>
<dbReference type="NCBIfam" id="TIGR01031">
    <property type="entry name" value="rpmF_bact"/>
    <property type="match status" value="1"/>
</dbReference>
<dbReference type="PANTHER" id="PTHR35534">
    <property type="entry name" value="50S RIBOSOMAL PROTEIN L32"/>
    <property type="match status" value="1"/>
</dbReference>
<dbReference type="PANTHER" id="PTHR35534:SF1">
    <property type="entry name" value="LARGE RIBOSOMAL SUBUNIT PROTEIN BL32"/>
    <property type="match status" value="1"/>
</dbReference>
<dbReference type="Pfam" id="PF01783">
    <property type="entry name" value="Ribosomal_L32p"/>
    <property type="match status" value="1"/>
</dbReference>
<dbReference type="SUPFAM" id="SSF57829">
    <property type="entry name" value="Zn-binding ribosomal proteins"/>
    <property type="match status" value="1"/>
</dbReference>
<reference key="1">
    <citation type="journal article" date="2001" name="Proc. Natl. Acad. Sci. U.S.A.">
        <title>Analysis of the chromosome sequence of the legume symbiont Sinorhizobium meliloti strain 1021.</title>
        <authorList>
            <person name="Capela D."/>
            <person name="Barloy-Hubler F."/>
            <person name="Gouzy J."/>
            <person name="Bothe G."/>
            <person name="Ampe F."/>
            <person name="Batut J."/>
            <person name="Boistard P."/>
            <person name="Becker A."/>
            <person name="Boutry M."/>
            <person name="Cadieu E."/>
            <person name="Dreano S."/>
            <person name="Gloux S."/>
            <person name="Godrie T."/>
            <person name="Goffeau A."/>
            <person name="Kahn D."/>
            <person name="Kiss E."/>
            <person name="Lelaure V."/>
            <person name="Masuy D."/>
            <person name="Pohl T."/>
            <person name="Portetelle D."/>
            <person name="Puehler A."/>
            <person name="Purnelle B."/>
            <person name="Ramsperger U."/>
            <person name="Renard C."/>
            <person name="Thebault P."/>
            <person name="Vandenbol M."/>
            <person name="Weidner S."/>
            <person name="Galibert F."/>
        </authorList>
    </citation>
    <scope>NUCLEOTIDE SEQUENCE [LARGE SCALE GENOMIC DNA]</scope>
    <source>
        <strain>1021</strain>
    </source>
</reference>
<reference key="2">
    <citation type="journal article" date="2001" name="Science">
        <title>The composite genome of the legume symbiont Sinorhizobium meliloti.</title>
        <authorList>
            <person name="Galibert F."/>
            <person name="Finan T.M."/>
            <person name="Long S.R."/>
            <person name="Puehler A."/>
            <person name="Abola P."/>
            <person name="Ampe F."/>
            <person name="Barloy-Hubler F."/>
            <person name="Barnett M.J."/>
            <person name="Becker A."/>
            <person name="Boistard P."/>
            <person name="Bothe G."/>
            <person name="Boutry M."/>
            <person name="Bowser L."/>
            <person name="Buhrmester J."/>
            <person name="Cadieu E."/>
            <person name="Capela D."/>
            <person name="Chain P."/>
            <person name="Cowie A."/>
            <person name="Davis R.W."/>
            <person name="Dreano S."/>
            <person name="Federspiel N.A."/>
            <person name="Fisher R.F."/>
            <person name="Gloux S."/>
            <person name="Godrie T."/>
            <person name="Goffeau A."/>
            <person name="Golding B."/>
            <person name="Gouzy J."/>
            <person name="Gurjal M."/>
            <person name="Hernandez-Lucas I."/>
            <person name="Hong A."/>
            <person name="Huizar L."/>
            <person name="Hyman R.W."/>
            <person name="Jones T."/>
            <person name="Kahn D."/>
            <person name="Kahn M.L."/>
            <person name="Kalman S."/>
            <person name="Keating D.H."/>
            <person name="Kiss E."/>
            <person name="Komp C."/>
            <person name="Lelaure V."/>
            <person name="Masuy D."/>
            <person name="Palm C."/>
            <person name="Peck M.C."/>
            <person name="Pohl T.M."/>
            <person name="Portetelle D."/>
            <person name="Purnelle B."/>
            <person name="Ramsperger U."/>
            <person name="Surzycki R."/>
            <person name="Thebault P."/>
            <person name="Vandenbol M."/>
            <person name="Vorhoelter F.J."/>
            <person name="Weidner S."/>
            <person name="Wells D.H."/>
            <person name="Wong K."/>
            <person name="Yeh K.-C."/>
            <person name="Batut J."/>
        </authorList>
    </citation>
    <scope>NUCLEOTIDE SEQUENCE [LARGE SCALE GENOMIC DNA]</scope>
    <source>
        <strain>1021</strain>
    </source>
</reference>
<sequence>MAVPKRKTSPSKRGMRRSADALKAPTYIEDKNSGELRRPHHIDLKTGMYRGRQVLTPKENA</sequence>
<evidence type="ECO:0000255" key="1">
    <source>
        <dbReference type="HAMAP-Rule" id="MF_00340"/>
    </source>
</evidence>
<evidence type="ECO:0000256" key="2">
    <source>
        <dbReference type="SAM" id="MobiDB-lite"/>
    </source>
</evidence>
<evidence type="ECO:0000305" key="3"/>